<organism>
    <name type="scientific">Erythrobacter litoralis (strain HTCC2594)</name>
    <dbReference type="NCBI Taxonomy" id="314225"/>
    <lineage>
        <taxon>Bacteria</taxon>
        <taxon>Pseudomonadati</taxon>
        <taxon>Pseudomonadota</taxon>
        <taxon>Alphaproteobacteria</taxon>
        <taxon>Sphingomonadales</taxon>
        <taxon>Erythrobacteraceae</taxon>
        <taxon>Erythrobacter/Porphyrobacter group</taxon>
        <taxon>Erythrobacter</taxon>
    </lineage>
</organism>
<proteinExistence type="inferred from homology"/>
<reference key="1">
    <citation type="journal article" date="2009" name="J. Bacteriol.">
        <title>Complete genome sequence of Erythrobacter litoralis HTCC2594.</title>
        <authorList>
            <person name="Oh H.M."/>
            <person name="Giovannoni S.J."/>
            <person name="Ferriera S."/>
            <person name="Johnson J."/>
            <person name="Cho J.C."/>
        </authorList>
    </citation>
    <scope>NUCLEOTIDE SEQUENCE [LARGE SCALE GENOMIC DNA]</scope>
    <source>
        <strain>HTCC2594</strain>
    </source>
</reference>
<accession>Q2ND71</accession>
<name>GATB_ERYLH</name>
<evidence type="ECO:0000255" key="1">
    <source>
        <dbReference type="HAMAP-Rule" id="MF_00121"/>
    </source>
</evidence>
<sequence>MSTYRIQGATGEWEVVIGLEVHAQVTSNAKLFSGASTEFGAEPNAQVSLVDAAMPGMLPVPNRECIRQAVRTGMAIEAQINTWSRFDRKNYFYADLPQGYQISQLYHPLVGEGQLLIEADEKAGISEDKVIGIERIHVEQDAGKLMHDQHPTMSYVDLNRCGVALMEIVSRPDMRSPAEAGAYVRKLRAILRYVGSCDGNMEEGSMRADVNVSVRRPGEEFGTRTETKNVNSVRFVMQVIEYEANRQVDLIESGGAVEQETRLFDPGTGTTRTMRSKEDAHDYRYFPDPDLLPLELEDSFLDECRASLPELPDAKRQRYENELGLTPYNARELTAEVETFARFETLLAATAKAIGEDEKKVATQVANWALSVAPGVIKSLGDEAHVENATAERQAAILKMQDAGEISGGQAKEIFEIVLKEGGDPATIADEKGLKQVSDTGAIEAAIDEILANNEDKVEQYKCGKDKLFGFFVGQTMKAMQGKANPAVVNQILKDKLG</sequence>
<keyword id="KW-0067">ATP-binding</keyword>
<keyword id="KW-0436">Ligase</keyword>
<keyword id="KW-0547">Nucleotide-binding</keyword>
<keyword id="KW-0648">Protein biosynthesis</keyword>
<keyword id="KW-1185">Reference proteome</keyword>
<comment type="function">
    <text evidence="1">Allows the formation of correctly charged Asn-tRNA(Asn) or Gln-tRNA(Gln) through the transamidation of misacylated Asp-tRNA(Asn) or Glu-tRNA(Gln) in organisms which lack either or both of asparaginyl-tRNA or glutaminyl-tRNA synthetases. The reaction takes place in the presence of glutamine and ATP through an activated phospho-Asp-tRNA(Asn) or phospho-Glu-tRNA(Gln).</text>
</comment>
<comment type="catalytic activity">
    <reaction evidence="1">
        <text>L-glutamyl-tRNA(Gln) + L-glutamine + ATP + H2O = L-glutaminyl-tRNA(Gln) + L-glutamate + ADP + phosphate + H(+)</text>
        <dbReference type="Rhea" id="RHEA:17521"/>
        <dbReference type="Rhea" id="RHEA-COMP:9681"/>
        <dbReference type="Rhea" id="RHEA-COMP:9684"/>
        <dbReference type="ChEBI" id="CHEBI:15377"/>
        <dbReference type="ChEBI" id="CHEBI:15378"/>
        <dbReference type="ChEBI" id="CHEBI:29985"/>
        <dbReference type="ChEBI" id="CHEBI:30616"/>
        <dbReference type="ChEBI" id="CHEBI:43474"/>
        <dbReference type="ChEBI" id="CHEBI:58359"/>
        <dbReference type="ChEBI" id="CHEBI:78520"/>
        <dbReference type="ChEBI" id="CHEBI:78521"/>
        <dbReference type="ChEBI" id="CHEBI:456216"/>
    </reaction>
</comment>
<comment type="catalytic activity">
    <reaction evidence="1">
        <text>L-aspartyl-tRNA(Asn) + L-glutamine + ATP + H2O = L-asparaginyl-tRNA(Asn) + L-glutamate + ADP + phosphate + 2 H(+)</text>
        <dbReference type="Rhea" id="RHEA:14513"/>
        <dbReference type="Rhea" id="RHEA-COMP:9674"/>
        <dbReference type="Rhea" id="RHEA-COMP:9677"/>
        <dbReference type="ChEBI" id="CHEBI:15377"/>
        <dbReference type="ChEBI" id="CHEBI:15378"/>
        <dbReference type="ChEBI" id="CHEBI:29985"/>
        <dbReference type="ChEBI" id="CHEBI:30616"/>
        <dbReference type="ChEBI" id="CHEBI:43474"/>
        <dbReference type="ChEBI" id="CHEBI:58359"/>
        <dbReference type="ChEBI" id="CHEBI:78515"/>
        <dbReference type="ChEBI" id="CHEBI:78516"/>
        <dbReference type="ChEBI" id="CHEBI:456216"/>
    </reaction>
</comment>
<comment type="subunit">
    <text evidence="1">Heterotrimer of A, B and C subunits.</text>
</comment>
<comment type="similarity">
    <text evidence="1">Belongs to the GatB/GatE family. GatB subfamily.</text>
</comment>
<dbReference type="EC" id="6.3.5.-" evidence="1"/>
<dbReference type="EMBL" id="CP000157">
    <property type="protein sequence ID" value="ABC62370.1"/>
    <property type="molecule type" value="Genomic_DNA"/>
</dbReference>
<dbReference type="RefSeq" id="WP_011413246.1">
    <property type="nucleotide sequence ID" value="NC_007722.1"/>
</dbReference>
<dbReference type="SMR" id="Q2ND71"/>
<dbReference type="STRING" id="314225.ELI_01390"/>
<dbReference type="KEGG" id="eli:ELI_01390"/>
<dbReference type="eggNOG" id="COG0064">
    <property type="taxonomic scope" value="Bacteria"/>
</dbReference>
<dbReference type="HOGENOM" id="CLU_019240_0_0_5"/>
<dbReference type="OrthoDB" id="9804078at2"/>
<dbReference type="Proteomes" id="UP000008808">
    <property type="component" value="Chromosome"/>
</dbReference>
<dbReference type="GO" id="GO:0050566">
    <property type="term" value="F:asparaginyl-tRNA synthase (glutamine-hydrolyzing) activity"/>
    <property type="evidence" value="ECO:0007669"/>
    <property type="project" value="RHEA"/>
</dbReference>
<dbReference type="GO" id="GO:0005524">
    <property type="term" value="F:ATP binding"/>
    <property type="evidence" value="ECO:0007669"/>
    <property type="project" value="UniProtKB-KW"/>
</dbReference>
<dbReference type="GO" id="GO:0050567">
    <property type="term" value="F:glutaminyl-tRNA synthase (glutamine-hydrolyzing) activity"/>
    <property type="evidence" value="ECO:0007669"/>
    <property type="project" value="UniProtKB-UniRule"/>
</dbReference>
<dbReference type="GO" id="GO:0070681">
    <property type="term" value="P:glutaminyl-tRNAGln biosynthesis via transamidation"/>
    <property type="evidence" value="ECO:0007669"/>
    <property type="project" value="TreeGrafter"/>
</dbReference>
<dbReference type="GO" id="GO:0006412">
    <property type="term" value="P:translation"/>
    <property type="evidence" value="ECO:0007669"/>
    <property type="project" value="UniProtKB-UniRule"/>
</dbReference>
<dbReference type="FunFam" id="1.10.10.410:FF:000001">
    <property type="entry name" value="Aspartyl/glutamyl-tRNA(Asn/Gln) amidotransferase subunit B"/>
    <property type="match status" value="1"/>
</dbReference>
<dbReference type="Gene3D" id="1.10.10.410">
    <property type="match status" value="1"/>
</dbReference>
<dbReference type="Gene3D" id="1.10.150.380">
    <property type="entry name" value="GatB domain, N-terminal subdomain"/>
    <property type="match status" value="1"/>
</dbReference>
<dbReference type="HAMAP" id="MF_00121">
    <property type="entry name" value="GatB"/>
    <property type="match status" value="1"/>
</dbReference>
<dbReference type="InterPro" id="IPR017959">
    <property type="entry name" value="Asn/Gln-tRNA_amidoTrfase_suB/E"/>
</dbReference>
<dbReference type="InterPro" id="IPR006075">
    <property type="entry name" value="Asn/Gln-tRNA_Trfase_suB/E_cat"/>
</dbReference>
<dbReference type="InterPro" id="IPR018027">
    <property type="entry name" value="Asn/Gln_amidotransferase"/>
</dbReference>
<dbReference type="InterPro" id="IPR003789">
    <property type="entry name" value="Asn/Gln_tRNA_amidoTrase-B-like"/>
</dbReference>
<dbReference type="InterPro" id="IPR004413">
    <property type="entry name" value="GatB"/>
</dbReference>
<dbReference type="InterPro" id="IPR042114">
    <property type="entry name" value="GatB_C_1"/>
</dbReference>
<dbReference type="InterPro" id="IPR023168">
    <property type="entry name" value="GatB_Yqey_C_2"/>
</dbReference>
<dbReference type="InterPro" id="IPR017958">
    <property type="entry name" value="Gln-tRNA_amidoTrfase_suB_CS"/>
</dbReference>
<dbReference type="InterPro" id="IPR014746">
    <property type="entry name" value="Gln_synth/guanido_kin_cat_dom"/>
</dbReference>
<dbReference type="NCBIfam" id="TIGR00133">
    <property type="entry name" value="gatB"/>
    <property type="match status" value="1"/>
</dbReference>
<dbReference type="NCBIfam" id="NF004012">
    <property type="entry name" value="PRK05477.1-2"/>
    <property type="match status" value="1"/>
</dbReference>
<dbReference type="NCBIfam" id="NF004014">
    <property type="entry name" value="PRK05477.1-4"/>
    <property type="match status" value="1"/>
</dbReference>
<dbReference type="NCBIfam" id="NF004015">
    <property type="entry name" value="PRK05477.1-5"/>
    <property type="match status" value="1"/>
</dbReference>
<dbReference type="PANTHER" id="PTHR11659">
    <property type="entry name" value="GLUTAMYL-TRNA GLN AMIDOTRANSFERASE SUBUNIT B MITOCHONDRIAL AND PROKARYOTIC PET112-RELATED"/>
    <property type="match status" value="1"/>
</dbReference>
<dbReference type="PANTHER" id="PTHR11659:SF0">
    <property type="entry name" value="GLUTAMYL-TRNA(GLN) AMIDOTRANSFERASE SUBUNIT B, MITOCHONDRIAL"/>
    <property type="match status" value="1"/>
</dbReference>
<dbReference type="Pfam" id="PF02934">
    <property type="entry name" value="GatB_N"/>
    <property type="match status" value="1"/>
</dbReference>
<dbReference type="Pfam" id="PF02637">
    <property type="entry name" value="GatB_Yqey"/>
    <property type="match status" value="1"/>
</dbReference>
<dbReference type="SMART" id="SM00845">
    <property type="entry name" value="GatB_Yqey"/>
    <property type="match status" value="1"/>
</dbReference>
<dbReference type="SUPFAM" id="SSF89095">
    <property type="entry name" value="GatB/YqeY motif"/>
    <property type="match status" value="2"/>
</dbReference>
<dbReference type="SUPFAM" id="SSF55931">
    <property type="entry name" value="Glutamine synthetase/guanido kinase"/>
    <property type="match status" value="1"/>
</dbReference>
<dbReference type="PROSITE" id="PS01234">
    <property type="entry name" value="GATB"/>
    <property type="match status" value="1"/>
</dbReference>
<feature type="chain" id="PRO_1000015965" description="Aspartyl/glutamyl-tRNA(Asn/Gln) amidotransferase subunit B">
    <location>
        <begin position="1"/>
        <end position="498"/>
    </location>
</feature>
<protein>
    <recommendedName>
        <fullName evidence="1">Aspartyl/glutamyl-tRNA(Asn/Gln) amidotransferase subunit B</fullName>
        <shortName evidence="1">Asp/Glu-ADT subunit B</shortName>
        <ecNumber evidence="1">6.3.5.-</ecNumber>
    </recommendedName>
</protein>
<gene>
    <name evidence="1" type="primary">gatB</name>
    <name type="ordered locus">ELI_01390</name>
</gene>